<gene>
    <name evidence="2" type="primary">SMR16</name>
    <name evidence="3" type="ordered locus">At1g08035</name>
    <name evidence="4" type="ORF">T6D22.11</name>
</gene>
<reference key="1">
    <citation type="journal article" date="2000" name="Nature">
        <title>Sequence and analysis of chromosome 1 of the plant Arabidopsis thaliana.</title>
        <authorList>
            <person name="Theologis A."/>
            <person name="Ecker J.R."/>
            <person name="Palm C.J."/>
            <person name="Federspiel N.A."/>
            <person name="Kaul S."/>
            <person name="White O."/>
            <person name="Alonso J."/>
            <person name="Altafi H."/>
            <person name="Araujo R."/>
            <person name="Bowman C.L."/>
            <person name="Brooks S.Y."/>
            <person name="Buehler E."/>
            <person name="Chan A."/>
            <person name="Chao Q."/>
            <person name="Chen H."/>
            <person name="Cheuk R.F."/>
            <person name="Chin C.W."/>
            <person name="Chung M.K."/>
            <person name="Conn L."/>
            <person name="Conway A.B."/>
            <person name="Conway A.R."/>
            <person name="Creasy T.H."/>
            <person name="Dewar K."/>
            <person name="Dunn P."/>
            <person name="Etgu P."/>
            <person name="Feldblyum T.V."/>
            <person name="Feng J.-D."/>
            <person name="Fong B."/>
            <person name="Fujii C.Y."/>
            <person name="Gill J.E."/>
            <person name="Goldsmith A.D."/>
            <person name="Haas B."/>
            <person name="Hansen N.F."/>
            <person name="Hughes B."/>
            <person name="Huizar L."/>
            <person name="Hunter J.L."/>
            <person name="Jenkins J."/>
            <person name="Johnson-Hopson C."/>
            <person name="Khan S."/>
            <person name="Khaykin E."/>
            <person name="Kim C.J."/>
            <person name="Koo H.L."/>
            <person name="Kremenetskaia I."/>
            <person name="Kurtz D.B."/>
            <person name="Kwan A."/>
            <person name="Lam B."/>
            <person name="Langin-Hooper S."/>
            <person name="Lee A."/>
            <person name="Lee J.M."/>
            <person name="Lenz C.A."/>
            <person name="Li J.H."/>
            <person name="Li Y.-P."/>
            <person name="Lin X."/>
            <person name="Liu S.X."/>
            <person name="Liu Z.A."/>
            <person name="Luros J.S."/>
            <person name="Maiti R."/>
            <person name="Marziali A."/>
            <person name="Militscher J."/>
            <person name="Miranda M."/>
            <person name="Nguyen M."/>
            <person name="Nierman W.C."/>
            <person name="Osborne B.I."/>
            <person name="Pai G."/>
            <person name="Peterson J."/>
            <person name="Pham P.K."/>
            <person name="Rizzo M."/>
            <person name="Rooney T."/>
            <person name="Rowley D."/>
            <person name="Sakano H."/>
            <person name="Salzberg S.L."/>
            <person name="Schwartz J.R."/>
            <person name="Shinn P."/>
            <person name="Southwick A.M."/>
            <person name="Sun H."/>
            <person name="Tallon L.J."/>
            <person name="Tambunga G."/>
            <person name="Toriumi M.J."/>
            <person name="Town C.D."/>
            <person name="Utterback T."/>
            <person name="Van Aken S."/>
            <person name="Vaysberg M."/>
            <person name="Vysotskaia V.S."/>
            <person name="Walker M."/>
            <person name="Wu D."/>
            <person name="Yu G."/>
            <person name="Fraser C.M."/>
            <person name="Venter J.C."/>
            <person name="Davis R.W."/>
        </authorList>
    </citation>
    <scope>NUCLEOTIDE SEQUENCE [LARGE SCALE GENOMIC DNA]</scope>
    <source>
        <strain>cv. Columbia</strain>
    </source>
</reference>
<reference key="2">
    <citation type="journal article" date="2017" name="Plant J.">
        <title>Araport11: a complete reannotation of the Arabidopsis thaliana reference genome.</title>
        <authorList>
            <person name="Cheng C.Y."/>
            <person name="Krishnakumar V."/>
            <person name="Chan A.P."/>
            <person name="Thibaud-Nissen F."/>
            <person name="Schobel S."/>
            <person name="Town C.D."/>
        </authorList>
    </citation>
    <scope>GENOME REANNOTATION</scope>
    <source>
        <strain>cv. Columbia</strain>
    </source>
</reference>
<reference key="3">
    <citation type="journal article" date="2015" name="Plant Cell">
        <title>Functional conservation in the SIAMESE-RELATED family of cyclin-dependent kinase inhibitors in land plants.</title>
        <authorList>
            <person name="Kumar N."/>
            <person name="Harashima H."/>
            <person name="Kalve S."/>
            <person name="Bramsiepe J."/>
            <person name="Wang K."/>
            <person name="Sizani B.L."/>
            <person name="Bertrand L.L."/>
            <person name="Johnson M.C."/>
            <person name="Faulk C."/>
            <person name="Dale R."/>
            <person name="Simmons L.A."/>
            <person name="Churchman M.L."/>
            <person name="Sugimoto K."/>
            <person name="Kato N."/>
            <person name="Dasanayake M."/>
            <person name="Beemster G."/>
            <person name="Schnittger A."/>
            <person name="Larkin J.C."/>
        </authorList>
    </citation>
    <scope>GENE FAMILY</scope>
    <scope>NOMENCLATURE</scope>
</reference>
<accession>Q9LN05</accession>
<dbReference type="EMBL" id="AC026875">
    <property type="protein sequence ID" value="AAF79825.1"/>
    <property type="molecule type" value="Genomic_DNA"/>
</dbReference>
<dbReference type="EMBL" id="CP002684">
    <property type="protein sequence ID" value="AEE28232.1"/>
    <property type="molecule type" value="Genomic_DNA"/>
</dbReference>
<dbReference type="RefSeq" id="NP_683287.2">
    <property type="nucleotide sequence ID" value="NM_148446.3"/>
</dbReference>
<dbReference type="STRING" id="3702.Q9LN05"/>
<dbReference type="GlyGen" id="Q9LN05">
    <property type="glycosylation" value="1 site"/>
</dbReference>
<dbReference type="PaxDb" id="3702-AT1G08035.1"/>
<dbReference type="EnsemblPlants" id="AT1G08035.1">
    <property type="protein sequence ID" value="AT1G08035.1"/>
    <property type="gene ID" value="AT1G08035"/>
</dbReference>
<dbReference type="GeneID" id="837319"/>
<dbReference type="Gramene" id="AT1G08035.1">
    <property type="protein sequence ID" value="AT1G08035.1"/>
    <property type="gene ID" value="AT1G08035"/>
</dbReference>
<dbReference type="KEGG" id="ath:AT1G08035"/>
<dbReference type="Araport" id="AT1G08035"/>
<dbReference type="TAIR" id="AT1G08035"/>
<dbReference type="HOGENOM" id="CLU_163607_0_0_1"/>
<dbReference type="InParanoid" id="Q9LN05"/>
<dbReference type="OMA" id="NEDRCEV"/>
<dbReference type="OrthoDB" id="777328at2759"/>
<dbReference type="PhylomeDB" id="Q9LN05"/>
<dbReference type="PRO" id="PR:Q9LN05"/>
<dbReference type="Proteomes" id="UP000006548">
    <property type="component" value="Chromosome 1"/>
</dbReference>
<dbReference type="ExpressionAtlas" id="Q9LN05">
    <property type="expression patterns" value="baseline and differential"/>
</dbReference>
<dbReference type="GO" id="GO:0004860">
    <property type="term" value="F:protein kinase inhibitor activity"/>
    <property type="evidence" value="ECO:0007669"/>
    <property type="project" value="UniProtKB-KW"/>
</dbReference>
<dbReference type="InterPro" id="IPR038971">
    <property type="entry name" value="SMR11/SMR16"/>
</dbReference>
<dbReference type="PANTHER" id="PTHR36310">
    <property type="entry name" value="CYCLIN-DEPENDENT PROTEIN KINASE INHIBITOR SMR11"/>
    <property type="match status" value="1"/>
</dbReference>
<dbReference type="PANTHER" id="PTHR36310:SF2">
    <property type="entry name" value="CYCLIN-DEPENDENT PROTEIN KINASE INHIBITOR SMR16"/>
    <property type="match status" value="1"/>
</dbReference>
<proteinExistence type="inferred from homology"/>
<organism>
    <name type="scientific">Arabidopsis thaliana</name>
    <name type="common">Mouse-ear cress</name>
    <dbReference type="NCBI Taxonomy" id="3702"/>
    <lineage>
        <taxon>Eukaryota</taxon>
        <taxon>Viridiplantae</taxon>
        <taxon>Streptophyta</taxon>
        <taxon>Embryophyta</taxon>
        <taxon>Tracheophyta</taxon>
        <taxon>Spermatophyta</taxon>
        <taxon>Magnoliopsida</taxon>
        <taxon>eudicotyledons</taxon>
        <taxon>Gunneridae</taxon>
        <taxon>Pentapetalae</taxon>
        <taxon>rosids</taxon>
        <taxon>malvids</taxon>
        <taxon>Brassicales</taxon>
        <taxon>Brassicaceae</taxon>
        <taxon>Camelineae</taxon>
        <taxon>Arabidopsis</taxon>
    </lineage>
</organism>
<evidence type="ECO:0000250" key="1">
    <source>
        <dbReference type="UniProtKB" id="Q9LZ78"/>
    </source>
</evidence>
<evidence type="ECO:0000303" key="2">
    <source>
    </source>
</evidence>
<evidence type="ECO:0000312" key="3">
    <source>
        <dbReference type="Araport" id="AT1G08035"/>
    </source>
</evidence>
<evidence type="ECO:0000312" key="4">
    <source>
        <dbReference type="EMBL" id="AAF79825.1"/>
    </source>
</evidence>
<sequence>MVLLSFSRYCDTITMDYEENSIEGTSGYVEPITPMISKGDSGIIAISPLCDHYNNHMRIDSLTTCSDEEIIESLYQNIFSIVLCLQTEESGYGSHTPVSAACPGAPMKLTKLSRNIDPGFQRKLF</sequence>
<name>SMR16_ARATH</name>
<keyword id="KW-0131">Cell cycle</keyword>
<keyword id="KW-0649">Protein kinase inhibitor</keyword>
<keyword id="KW-1185">Reference proteome</keyword>
<feature type="chain" id="PRO_0000438475" description="Cyclin-dependent protein kinase inhibitor SMR16">
    <location>
        <begin position="1"/>
        <end position="125"/>
    </location>
</feature>
<comment type="function">
    <text evidence="1">Probable cyclin-dependent protein kinase (CDK) inhibitor that functions as a repressor of mitosis in the endoreduplication cell cycle.</text>
</comment>
<protein>
    <recommendedName>
        <fullName evidence="2">Cyclin-dependent protein kinase inhibitor SMR16</fullName>
    </recommendedName>
    <alternativeName>
        <fullName evidence="2">Protein SIAMESE-RELATED 16</fullName>
    </alternativeName>
</protein>